<feature type="chain" id="PRO_0000223071" description="Protein Ycf2">
    <location>
        <begin position="1"/>
        <end position="2280"/>
    </location>
</feature>
<feature type="binding site" evidence="1">
    <location>
        <begin position="1631"/>
        <end position="1638"/>
    </location>
    <ligand>
        <name>ATP</name>
        <dbReference type="ChEBI" id="CHEBI:30616"/>
    </ligand>
</feature>
<dbReference type="EMBL" id="Z00044">
    <property type="protein sequence ID" value="CAA77427.1"/>
    <property type="molecule type" value="Genomic_DNA"/>
</dbReference>
<dbReference type="EMBL" id="Z00044">
    <property type="protein sequence ID" value="CAA77438.1"/>
    <property type="molecule type" value="Genomic_DNA"/>
</dbReference>
<dbReference type="PIR" id="A05204">
    <property type="entry name" value="A05204"/>
</dbReference>
<dbReference type="PIR" id="A05205">
    <property type="entry name" value="A05205"/>
</dbReference>
<dbReference type="KEGG" id="nta:800485"/>
<dbReference type="KEGG" id="nta:800486"/>
<dbReference type="OMA" id="IMSESNW"/>
<dbReference type="OrthoDB" id="1669967at2759"/>
<dbReference type="Proteomes" id="UP000084051">
    <property type="component" value="Unplaced"/>
</dbReference>
<dbReference type="GO" id="GO:0009570">
    <property type="term" value="C:chloroplast stroma"/>
    <property type="evidence" value="ECO:0007669"/>
    <property type="project" value="UniProtKB-SubCell"/>
</dbReference>
<dbReference type="GO" id="GO:0005524">
    <property type="term" value="F:ATP binding"/>
    <property type="evidence" value="ECO:0007669"/>
    <property type="project" value="UniProtKB-KW"/>
</dbReference>
<dbReference type="GO" id="GO:0016887">
    <property type="term" value="F:ATP hydrolysis activity"/>
    <property type="evidence" value="ECO:0007669"/>
    <property type="project" value="InterPro"/>
</dbReference>
<dbReference type="CDD" id="cd19505">
    <property type="entry name" value="RecA-like_Ycf2"/>
    <property type="match status" value="1"/>
</dbReference>
<dbReference type="Gene3D" id="3.40.50.300">
    <property type="entry name" value="P-loop containing nucleotide triphosphate hydrolases"/>
    <property type="match status" value="1"/>
</dbReference>
<dbReference type="HAMAP" id="MF_01330">
    <property type="entry name" value="Ycf2"/>
    <property type="match status" value="1"/>
</dbReference>
<dbReference type="InterPro" id="IPR003593">
    <property type="entry name" value="AAA+_ATPase"/>
</dbReference>
<dbReference type="InterPro" id="IPR003959">
    <property type="entry name" value="ATPase_AAA_core"/>
</dbReference>
<dbReference type="InterPro" id="IPR027417">
    <property type="entry name" value="P-loop_NTPase"/>
</dbReference>
<dbReference type="InterPro" id="IPR008543">
    <property type="entry name" value="Uncharacterised_Ycf2"/>
</dbReference>
<dbReference type="InterPro" id="IPR056777">
    <property type="entry name" value="Ycf2_N"/>
</dbReference>
<dbReference type="PANTHER" id="PTHR33078:SF51">
    <property type="entry name" value="PROTEIN TIC 214"/>
    <property type="match status" value="1"/>
</dbReference>
<dbReference type="PANTHER" id="PTHR33078">
    <property type="entry name" value="PROTEIN YCF2-RELATED"/>
    <property type="match status" value="1"/>
</dbReference>
<dbReference type="Pfam" id="PF00004">
    <property type="entry name" value="AAA"/>
    <property type="match status" value="1"/>
</dbReference>
<dbReference type="Pfam" id="PF05695">
    <property type="entry name" value="Ycf2"/>
    <property type="match status" value="1"/>
</dbReference>
<dbReference type="SMART" id="SM00382">
    <property type="entry name" value="AAA"/>
    <property type="match status" value="1"/>
</dbReference>
<dbReference type="SUPFAM" id="SSF52540">
    <property type="entry name" value="P-loop containing nucleoside triphosphate hydrolases"/>
    <property type="match status" value="1"/>
</dbReference>
<name>YCF2_TOBAC</name>
<protein>
    <recommendedName>
        <fullName>Protein Ycf2</fullName>
    </recommendedName>
</protein>
<gene>
    <name type="primary">ycf2-A</name>
</gene>
<gene>
    <name type="primary">ycf2-B</name>
</gene>
<organism>
    <name type="scientific">Nicotiana tabacum</name>
    <name type="common">Common tobacco</name>
    <dbReference type="NCBI Taxonomy" id="4097"/>
    <lineage>
        <taxon>Eukaryota</taxon>
        <taxon>Viridiplantae</taxon>
        <taxon>Streptophyta</taxon>
        <taxon>Embryophyta</taxon>
        <taxon>Tracheophyta</taxon>
        <taxon>Spermatophyta</taxon>
        <taxon>Magnoliopsida</taxon>
        <taxon>eudicotyledons</taxon>
        <taxon>Gunneridae</taxon>
        <taxon>Pentapetalae</taxon>
        <taxon>asterids</taxon>
        <taxon>lamiids</taxon>
        <taxon>Solanales</taxon>
        <taxon>Solanaceae</taxon>
        <taxon>Nicotianoideae</taxon>
        <taxon>Nicotianeae</taxon>
        <taxon>Nicotiana</taxon>
    </lineage>
</organism>
<comment type="function">
    <text>Probable ATPase of unknown function. Its presence in a non-photosynthetic plant (Epifagus virginiana) and experiments in tobacco indicate that it has an essential function which is probably not related to photosynthesis.</text>
</comment>
<comment type="subcellular location">
    <subcellularLocation>
        <location>Plastid</location>
        <location>Chloroplast stroma</location>
    </subcellularLocation>
</comment>
<comment type="miscellaneous">
    <text>Two proteins of approximately 170 kDa are detected; it is not clear which parts of the protein are stably expressed.</text>
</comment>
<comment type="similarity">
    <text evidence="2">Belongs to the Ycf2 family.</text>
</comment>
<evidence type="ECO:0000255" key="1"/>
<evidence type="ECO:0000305" key="2"/>
<proteinExistence type="inferred from homology"/>
<keyword id="KW-0067">ATP-binding</keyword>
<keyword id="KW-0150">Chloroplast</keyword>
<keyword id="KW-0547">Nucleotide-binding</keyword>
<keyword id="KW-0934">Plastid</keyword>
<keyword id="KW-1185">Reference proteome</keyword>
<accession>P09976</accession>
<accession>P09977</accession>
<geneLocation type="chloroplast"/>
<sequence length="2280" mass="266815">MRGHQFKSWIFELREILREIKNSHHFLDSWTQFNSAGSFIHIFFHQERFLKLFDPRIWSILLSRNSQGSTSNRYFTIKGVILFVVAVLIYRINNRNMVERKNLYLIGLLPIPMNSIGPRNDTLEESVGSSNINRLIVSLLYLPKGKKISESCFLNPKESTWVLPITKKCSMPESNWGSRWWRNWIGKKRDSSCKISNETVAGIEILFKEKDLKYLEFLFVYYMDDPIRKDHDWELFDRLSLRKSRNRINLNSGPLFEILVKHWISYLMSAFREKIPIEVEGFFKQQGAGSTIQSNDIEHVSHLFSRNKWAISLQNCAQFHMWQFRQDLFVSWGKNPPESDFLRNVSRENWIWLDNVWLVNKDRFFSKVQNVSSNIQYDSTRSSFVQVTDSSQLKGSSDQSRDHLDSISNEDSEYHTLINQREIQQRKERSILWDPSFLQTERKEIESGRFPKCLSGYSSMSRLFTEREKQMINHLFPEEIEEFLGNPTRSVRSFFSDRWSELHLGSNPTERSTRDQKLLKKQQDLSFVPSKRSENKEMVNIFKIITYLQNTVSIHPISSDPGCDMVPKDEPDMDSSNKISFLNKNPFFDLFHLFHDRNRGGYTLHYDFESEERFQEMADLFTLSITEPDLVYHKGFAFSIDSCGLDQKQFLNEARDESKKKSLLVLPPIFYEENESFSRRIRKKWVRISCGNDLEDPKPKIVVFASNNIMEAVTQYRLIRNLIQIQYSTYGYIRNVLNRFFLMNRSDRNFEYGIQRDQIGKDTLNHRTIMKYTINQYLSNLKKSQKKWFEPLILISRTERSMNRDPDAYRYKWSNGSKNFQEHLEQSVSEQKSRFQVVFDRLRINQYSIDWSEVIDKKDLSKPLRFFLSKSLLFLSKLLFFLSNSLPFFCVSFGNIPIHRSEIYIYELKGPNDQLCNQLLESIGLQIVHLKKWKPFLLDDHDTSQKSKFLINGGTISPFLFNKIPKWMIDSFHTRNNRRKSFDNPDSYFSMIFHDQDNWLNPVKPFHRSSLISSFYKANRLRFLNNPHHFCFYWNTRFPFSVEKARINNSDFTYGQFLNILFIRNKIFSLCVGKKKHAFWGRDTISPIESQVSNIFIPNDFPQSGDETYNLYKSFHFPSRSDPFVRRAIYSIADISGTPLTEGQIVNFERTYCQPLSDMNLSDSEGKNLHQYLNFNSNMGLIHTPCSEKDLSSEKRKKRSLCLKKCVEKGQMYRTFQRDSAFSTLSKWNLFQTYMPWFLTSTGYKYLNLIFLDTFSDLLPILSSSQKFVPIFHDIMHGSGISWRILQKKLCLPQWNLISEISSKCLHNLLLSEEMIHRNNESPLISTHLRSPNAREFLYSILFLLLVAGYLVRTHLLFVSRASSELQTEFEKVKSLMIPSSMIELRKLLDRYPTSEPNSFWLKNLFLVALEQLGDSLEEIRGSASGGNMLGPAYGVKSIRSKKKDWNINLIEIIDLIPNPINRITFSRNTRHLSHTSKEIYSLIRKRKNVNGDWIDDKIESWVANSDSIDDEEREFLVQFSTLTTENRIDQILLSLTHSDRLSKNDSGYQMIEQPGAIYLRYLVDIHKKHLMNYEFNPSCLAERRIFLAHYQTITYSQTSCGENSFHFPSHGKPFSLRLALSPSRGILVIGSIGTGRSYLVKYLATNSYVPFITVFLNKFLDNKPKGFLLDEIDIDDSDDIDDSDNLDASDDIDRDLDTELKLLTRMNGLTMDMMPEIDRFYITLQFELAKAMSPCIIWIPNIHDLDVNESNDLALGLLVNHLSRDCERCSTRNILVIASTHIPQKVDPALIAPNKLNTCIKIRRLLLPQQRKHFFTLSYTRGFHLEKKMFHTNGFGSITMGSNARDLVALTNEVLSISITQKKSIIDTNTIRSALHRQTWDLRSQVRSVQDHGILFYQIGRAVAQNVLLSNCPIDPISIYMKKKSCNEGDSYLYKWYFELGTSMKRLTILLYLLSCSAGSVAQDLWSLSGPDEKNGITSYGLVENDSDLVHGLLEVEGALVGSSRTEKDCSQFDNDRVTLLLRPEPRNPLDMMQNGSCSILDQRFLYEKYESEFEEGEGEGALDPQEDLFNHIVWAPRIWRPWGFLFDCIERPNELGFPYWSRSFRGKRIIYDEEDELQENDSEFLQSGTMQYQTRDRSSKEQGLFRISQFIWDPADPLFFLFKDQPPGSVFSHRELFADEEMSKGLLTSQTDPPTSIYKRWFIKNTQEKHFELLINRQRWLRTNSSLSNGSFRSNTLSESYQYLSNLFLSNGTLLDQMTKTLLRKRWLFPDEMKIGFM</sequence>
<reference key="1">
    <citation type="journal article" date="1986" name="EMBO J.">
        <title>The complete nucleotide sequence of the tobacco chloroplast genome: its gene organization and expression.</title>
        <authorList>
            <person name="Shinozaki K."/>
            <person name="Ohme M."/>
            <person name="Tanaka M."/>
            <person name="Wakasugi T."/>
            <person name="Hayashida N."/>
            <person name="Matsubayashi T."/>
            <person name="Zaita N."/>
            <person name="Chunwongse J."/>
            <person name="Obokata J."/>
            <person name="Yamaguchi-Shinozaki K."/>
            <person name="Ohto C."/>
            <person name="Torazawa K."/>
            <person name="Meng B.-Y."/>
            <person name="Sugita M."/>
            <person name="Deno H."/>
            <person name="Kamogashira T."/>
            <person name="Yamada K."/>
            <person name="Kusuda J."/>
            <person name="Takaiwa F."/>
            <person name="Kato A."/>
            <person name="Tohdoh N."/>
            <person name="Shimada H."/>
            <person name="Sugiura M."/>
        </authorList>
    </citation>
    <scope>NUCLEOTIDE SEQUENCE [LARGE SCALE GENOMIC DNA]</scope>
    <source>
        <strain>cv. Bright Yellow 4</strain>
    </source>
</reference>
<reference key="2">
    <citation type="submission" date="1998-02" db="EMBL/GenBank/DDBJ databases">
        <authorList>
            <person name="Sugiura M."/>
        </authorList>
    </citation>
    <scope>SEQUENCE REVISION</scope>
</reference>
<reference key="3">
    <citation type="journal article" date="2000" name="Plant J.">
        <title>The two largest chloroplast genome-encoded open reading frames of higher plants are essential genes.</title>
        <authorList>
            <person name="Drescher A."/>
            <person name="Ruf S."/>
            <person name="Calsa T. Jr."/>
            <person name="Carrer H."/>
            <person name="Bock R."/>
        </authorList>
    </citation>
    <scope>ESSENTIAL FOR GROWTH</scope>
    <source>
        <strain>cv. Petit Havana</strain>
    </source>
</reference>
<reference key="4">
    <citation type="journal article" date="1993" name="Plant Mol. Biol.">
        <title>Large unidentified open reading frame in plastid DNA (ORF2280) is expressed in chloroplasts.</title>
        <authorList>
            <person name="Glick R.E."/>
            <person name="Sears B.B."/>
        </authorList>
    </citation>
    <scope>DETECTION OF THE PROTEIN</scope>
    <source>
        <tissue>Green leaf</tissue>
    </source>
</reference>